<feature type="chain" id="PRO_0000280687" description="Ataxin-10 homolog">
    <location>
        <begin position="1"/>
        <end position="530"/>
    </location>
</feature>
<organism>
    <name type="scientific">Candida glabrata (strain ATCC 2001 / BCRC 20586 / JCM 3761 / NBRC 0622 / NRRL Y-65 / CBS 138)</name>
    <name type="common">Yeast</name>
    <name type="synonym">Nakaseomyces glabratus</name>
    <dbReference type="NCBI Taxonomy" id="284593"/>
    <lineage>
        <taxon>Eukaryota</taxon>
        <taxon>Fungi</taxon>
        <taxon>Dikarya</taxon>
        <taxon>Ascomycota</taxon>
        <taxon>Saccharomycotina</taxon>
        <taxon>Saccharomycetes</taxon>
        <taxon>Saccharomycetales</taxon>
        <taxon>Saccharomycetaceae</taxon>
        <taxon>Nakaseomyces</taxon>
    </lineage>
</organism>
<protein>
    <recommendedName>
        <fullName evidence="3">Ataxin-10 homolog</fullName>
    </recommendedName>
    <alternativeName>
        <fullName>Copper transport protein 86</fullName>
    </alternativeName>
</protein>
<accession>Q6FMC0</accession>
<name>ATX10_CANGA</name>
<comment type="function">
    <text evidence="2">May play a role in the regulation of cytokinesis.</text>
</comment>
<comment type="subcellular location">
    <subcellularLocation>
        <location evidence="1">Cytoplasm</location>
    </subcellularLocation>
</comment>
<comment type="similarity">
    <text evidence="3">Belongs to the ataxin-10 family.</text>
</comment>
<reference key="1">
    <citation type="journal article" date="2004" name="Nature">
        <title>Genome evolution in yeasts.</title>
        <authorList>
            <person name="Dujon B."/>
            <person name="Sherman D."/>
            <person name="Fischer G."/>
            <person name="Durrens P."/>
            <person name="Casaregola S."/>
            <person name="Lafontaine I."/>
            <person name="de Montigny J."/>
            <person name="Marck C."/>
            <person name="Neuveglise C."/>
            <person name="Talla E."/>
            <person name="Goffard N."/>
            <person name="Frangeul L."/>
            <person name="Aigle M."/>
            <person name="Anthouard V."/>
            <person name="Babour A."/>
            <person name="Barbe V."/>
            <person name="Barnay S."/>
            <person name="Blanchin S."/>
            <person name="Beckerich J.-M."/>
            <person name="Beyne E."/>
            <person name="Bleykasten C."/>
            <person name="Boisrame A."/>
            <person name="Boyer J."/>
            <person name="Cattolico L."/>
            <person name="Confanioleri F."/>
            <person name="de Daruvar A."/>
            <person name="Despons L."/>
            <person name="Fabre E."/>
            <person name="Fairhead C."/>
            <person name="Ferry-Dumazet H."/>
            <person name="Groppi A."/>
            <person name="Hantraye F."/>
            <person name="Hennequin C."/>
            <person name="Jauniaux N."/>
            <person name="Joyet P."/>
            <person name="Kachouri R."/>
            <person name="Kerrest A."/>
            <person name="Koszul R."/>
            <person name="Lemaire M."/>
            <person name="Lesur I."/>
            <person name="Ma L."/>
            <person name="Muller H."/>
            <person name="Nicaud J.-M."/>
            <person name="Nikolski M."/>
            <person name="Oztas S."/>
            <person name="Ozier-Kalogeropoulos O."/>
            <person name="Pellenz S."/>
            <person name="Potier S."/>
            <person name="Richard G.-F."/>
            <person name="Straub M.-L."/>
            <person name="Suleau A."/>
            <person name="Swennen D."/>
            <person name="Tekaia F."/>
            <person name="Wesolowski-Louvel M."/>
            <person name="Westhof E."/>
            <person name="Wirth B."/>
            <person name="Zeniou-Meyer M."/>
            <person name="Zivanovic Y."/>
            <person name="Bolotin-Fukuhara M."/>
            <person name="Thierry A."/>
            <person name="Bouchier C."/>
            <person name="Caudron B."/>
            <person name="Scarpelli C."/>
            <person name="Gaillardin C."/>
            <person name="Weissenbach J."/>
            <person name="Wincker P."/>
            <person name="Souciet J.-L."/>
        </authorList>
    </citation>
    <scope>NUCLEOTIDE SEQUENCE [LARGE SCALE GENOMIC DNA]</scope>
    <source>
        <strain>ATCC 2001 / BCRC 20586 / JCM 3761 / NBRC 0622 / NRRL Y-65 / CBS 138</strain>
    </source>
</reference>
<proteinExistence type="inferred from homology"/>
<sequence length="530" mass="61308">MSEKKKILQDIDRLLSEANSDPQLYHDNLGLLNDFVIETANNTAIRDKFSRDKETWQLIKTILVNSHVEDISGWSAEVIFLYKRLLRGVFILARNLAVSGSEIAQELLLQNIAYKIFNNSLKVGKLDDGMQLALYSTILSFLHNMSSKSVVFDRSSSKELFEFLHFPVKLNYEYTKDILLPYLLYFKDLIQHDDFLYYFLRYDKVDSILCGLILDKIMRDESQIFEIVSGTRIVSPDVNLSDIDMILLRTFALISTHESFIPYLEDKENNSFNIFIDLLKLMQLVVTNIDSWDKFQLTSIMTWTYKIFEKNADQIKNYFKNKLENEEIAKKLHAKCVITLDIMAKLCQFNHVQKFIISYKGLDQLISLLNIFQDNLIRVNFTKTSQASDITGVKATNKLGEKLAKDSLIEERIDLINMKIKETNFPECKLLIIEIIAMLTHENREIQNQVRELGGLGVILSNCVIDDNDPFIKERSIMCIKFLLKDNKENQNFVANLESKRVANDETLQEAGYEVDISKDGKLSLKSTNQ</sequence>
<gene>
    <name type="primary">CTR86</name>
    <name type="ordered locus">CAGL0K09306g</name>
</gene>
<evidence type="ECO:0000250" key="1">
    <source>
        <dbReference type="UniProtKB" id="P25355"/>
    </source>
</evidence>
<evidence type="ECO:0000250" key="2">
    <source>
        <dbReference type="UniProtKB" id="Q9UBB4"/>
    </source>
</evidence>
<evidence type="ECO:0000305" key="3"/>
<keyword id="KW-0131">Cell cycle</keyword>
<keyword id="KW-0132">Cell division</keyword>
<keyword id="KW-0963">Cytoplasm</keyword>
<keyword id="KW-1185">Reference proteome</keyword>
<dbReference type="EMBL" id="CR380957">
    <property type="protein sequence ID" value="CAG61587.1"/>
    <property type="molecule type" value="Genomic_DNA"/>
</dbReference>
<dbReference type="RefSeq" id="XP_448624.1">
    <property type="nucleotide sequence ID" value="XM_448624.1"/>
</dbReference>
<dbReference type="FunCoup" id="Q6FMC0">
    <property type="interactions" value="28"/>
</dbReference>
<dbReference type="EnsemblFungi" id="CAGL0K09306g-T">
    <property type="protein sequence ID" value="CAGL0K09306g-T-p1"/>
    <property type="gene ID" value="CAGL0K09306g"/>
</dbReference>
<dbReference type="KEGG" id="cgr:2890256"/>
<dbReference type="CGD" id="CAL0134853">
    <property type="gene designation" value="CAGL0K09306g"/>
</dbReference>
<dbReference type="VEuPathDB" id="FungiDB:CAGL0K09306g"/>
<dbReference type="eggNOG" id="KOG2676">
    <property type="taxonomic scope" value="Eukaryota"/>
</dbReference>
<dbReference type="HOGENOM" id="CLU_043683_0_0_1"/>
<dbReference type="InParanoid" id="Q6FMC0"/>
<dbReference type="OMA" id="IKERSIM"/>
<dbReference type="Proteomes" id="UP000002428">
    <property type="component" value="Chromosome K"/>
</dbReference>
<dbReference type="GO" id="GO:0005829">
    <property type="term" value="C:cytosol"/>
    <property type="evidence" value="ECO:0007669"/>
    <property type="project" value="TreeGrafter"/>
</dbReference>
<dbReference type="GO" id="GO:0051301">
    <property type="term" value="P:cell division"/>
    <property type="evidence" value="ECO:0007669"/>
    <property type="project" value="UniProtKB-KW"/>
</dbReference>
<dbReference type="Gene3D" id="1.25.10.10">
    <property type="entry name" value="Leucine-rich Repeat Variant"/>
    <property type="match status" value="1"/>
</dbReference>
<dbReference type="InterPro" id="IPR011989">
    <property type="entry name" value="ARM-like"/>
</dbReference>
<dbReference type="InterPro" id="IPR016024">
    <property type="entry name" value="ARM-type_fold"/>
</dbReference>
<dbReference type="InterPro" id="IPR051374">
    <property type="entry name" value="Ataxin-10/CTR86_families"/>
</dbReference>
<dbReference type="InterPro" id="IPR019156">
    <property type="entry name" value="Ataxin-10_domain"/>
</dbReference>
<dbReference type="PANTHER" id="PTHR13255">
    <property type="entry name" value="ATAXIN-10"/>
    <property type="match status" value="1"/>
</dbReference>
<dbReference type="PANTHER" id="PTHR13255:SF0">
    <property type="entry name" value="ATAXIN-10"/>
    <property type="match status" value="1"/>
</dbReference>
<dbReference type="Pfam" id="PF09759">
    <property type="entry name" value="Atx10homo_assoc"/>
    <property type="match status" value="1"/>
</dbReference>
<dbReference type="SUPFAM" id="SSF48371">
    <property type="entry name" value="ARM repeat"/>
    <property type="match status" value="1"/>
</dbReference>